<reference key="1">
    <citation type="journal article" date="2003" name="Virology">
        <title>The genome of the Cryptophlebia leucotreta granulovirus.</title>
        <authorList>
            <person name="Lange M."/>
            <person name="Jehle J.A."/>
        </authorList>
    </citation>
    <scope>NUCLEOTIDE SEQUENCE [LARGE SCALE GENOMIC DNA]</scope>
    <source>
        <strain>CV3</strain>
    </source>
</reference>
<reference key="2">
    <citation type="journal article" date="1994" name="J. Gen. Virol.">
        <title>Genome organization of the DNA-binding protein gene region of Cryptophlebia leucotreta granulosis virus is closely related to that of nuclear polyhedrosis viruses.</title>
        <authorList>
            <person name="Jehle J.A."/>
            <person name="Backhaus H."/>
        </authorList>
    </citation>
    <scope>NUCLEOTIDE SEQUENCE [GENOMIC DNA] OF 251-379</scope>
    <source>
        <strain>CV3</strain>
    </source>
</reference>
<keyword id="KW-1185">Reference proteome</keyword>
<proteinExistence type="predicted"/>
<feature type="chain" id="PRO_0000133083" description="Uncharacterized protein in P7.3 3'region">
    <location>
        <begin position="1"/>
        <end position="379"/>
    </location>
</feature>
<protein>
    <recommendedName>
        <fullName>Uncharacterized protein in P7.3 3'region</fullName>
    </recommendedName>
</protein>
<name>YP73_GVCL</name>
<sequence length="379" mass="43210">MSSAKTRLFLTIEKLKNSMDDPQMTYPFWEKFFPLLGNSTTITLELSTLSEMINEAAETAEQLIVTQGGVVYSQYVQNATNTSGTNNNMVNRRLLVPPISTATPVLQPLEIKKYHNFAEKIASYFVSASVQSSMYTVKDVVKLYLYLSHLPKFKPLFSLLEEALFTKQRNCVPAVTSDKLILILDNLRDLTVITNFRLDNEAVSLMLNNIQIVLNNELSKYPVVKVKDFISTSNVYEKEVEPFKAFGDKFELLVAQKSSHLVLSSENTLLFNSNPIIVENIAASIEYNCDINRMVYNSINNIFINSVEQSAAENIKFDVDDYNRRYRVLDRIRENLRNNYIEKVAVGDISSKKRITNNPTTIPPITLKKRRTSNLLIED</sequence>
<organismHost>
    <name type="scientific">Tortricidae</name>
    <dbReference type="NCBI Taxonomy" id="7139"/>
</organismHost>
<dbReference type="EMBL" id="AY229987">
    <property type="protein sequence ID" value="AAQ21671.1"/>
    <property type="molecule type" value="Genomic_DNA"/>
</dbReference>
<dbReference type="RefSeq" id="NP_891923.1">
    <property type="nucleotide sequence ID" value="NC_005068.1"/>
</dbReference>
<dbReference type="SMR" id="P41730"/>
<dbReference type="GeneID" id="1725055"/>
<dbReference type="KEGG" id="vg:1725055"/>
<dbReference type="OrthoDB" id="4354at10239"/>
<dbReference type="Proteomes" id="UP000203359">
    <property type="component" value="Genome"/>
</dbReference>
<dbReference type="InterPro" id="IPR008562">
    <property type="entry name" value="AcMNPV_C42"/>
</dbReference>
<dbReference type="Pfam" id="PF05815">
    <property type="entry name" value="AcMNPV_Orf101"/>
    <property type="match status" value="1"/>
</dbReference>
<organism>
    <name type="scientific">Cryptophlebia leucotreta granulosis virus</name>
    <name type="common">ClGV</name>
    <name type="synonym">Cryptophlebia leucotreta granulovirus</name>
    <dbReference type="NCBI Taxonomy" id="35254"/>
    <lineage>
        <taxon>Viruses</taxon>
        <taxon>Viruses incertae sedis</taxon>
        <taxon>Naldaviricetes</taxon>
        <taxon>Lefavirales</taxon>
        <taxon>Baculoviridae</taxon>
        <taxon>Betabaculovirus</taxon>
        <taxon>Betabaculovirus cryleucotretae</taxon>
    </lineage>
</organism>
<accession>P41730</accession>
<accession>Q7T5L3</accession>